<evidence type="ECO:0000255" key="1">
    <source>
        <dbReference type="HAMAP-Rule" id="MF_00791"/>
    </source>
</evidence>
<protein>
    <recommendedName>
        <fullName evidence="1">Protein ApaG</fullName>
    </recommendedName>
</protein>
<proteinExistence type="inferred from homology"/>
<feature type="chain" id="PRO_0000197939" description="Protein ApaG">
    <location>
        <begin position="1"/>
        <end position="131"/>
    </location>
</feature>
<feature type="domain" description="ApaG" evidence="1">
    <location>
        <begin position="7"/>
        <end position="131"/>
    </location>
</feature>
<dbReference type="EMBL" id="BX640435">
    <property type="protein sequence ID" value="CAE39432.1"/>
    <property type="molecule type" value="Genomic_DNA"/>
</dbReference>
<dbReference type="SMR" id="Q7W393"/>
<dbReference type="KEGG" id="bpa:BPP4153"/>
<dbReference type="HOGENOM" id="CLU_128074_0_0_4"/>
<dbReference type="Proteomes" id="UP000001421">
    <property type="component" value="Chromosome"/>
</dbReference>
<dbReference type="Gene3D" id="2.60.40.1470">
    <property type="entry name" value="ApaG domain"/>
    <property type="match status" value="1"/>
</dbReference>
<dbReference type="HAMAP" id="MF_00791">
    <property type="entry name" value="ApaG"/>
    <property type="match status" value="1"/>
</dbReference>
<dbReference type="InterPro" id="IPR050718">
    <property type="entry name" value="ApaG-like"/>
</dbReference>
<dbReference type="InterPro" id="IPR007474">
    <property type="entry name" value="ApaG_domain"/>
</dbReference>
<dbReference type="InterPro" id="IPR036767">
    <property type="entry name" value="ApaG_sf"/>
</dbReference>
<dbReference type="InterPro" id="IPR023065">
    <property type="entry name" value="Uncharacterised_ApaG"/>
</dbReference>
<dbReference type="NCBIfam" id="NF003967">
    <property type="entry name" value="PRK05461.1"/>
    <property type="match status" value="1"/>
</dbReference>
<dbReference type="PANTHER" id="PTHR47191">
    <property type="entry name" value="OS05G0170800 PROTEIN"/>
    <property type="match status" value="1"/>
</dbReference>
<dbReference type="PANTHER" id="PTHR47191:SF2">
    <property type="entry name" value="OS05G0170800 PROTEIN"/>
    <property type="match status" value="1"/>
</dbReference>
<dbReference type="Pfam" id="PF04379">
    <property type="entry name" value="DUF525"/>
    <property type="match status" value="1"/>
</dbReference>
<dbReference type="SUPFAM" id="SSF110069">
    <property type="entry name" value="ApaG-like"/>
    <property type="match status" value="1"/>
</dbReference>
<dbReference type="PROSITE" id="PS51087">
    <property type="entry name" value="APAG"/>
    <property type="match status" value="1"/>
</dbReference>
<name>APAG_BORPA</name>
<organism>
    <name type="scientific">Bordetella parapertussis (strain 12822 / ATCC BAA-587 / NCTC 13253)</name>
    <dbReference type="NCBI Taxonomy" id="257311"/>
    <lineage>
        <taxon>Bacteria</taxon>
        <taxon>Pseudomonadati</taxon>
        <taxon>Pseudomonadota</taxon>
        <taxon>Betaproteobacteria</taxon>
        <taxon>Burkholderiales</taxon>
        <taxon>Alcaligenaceae</taxon>
        <taxon>Bordetella</taxon>
    </lineage>
</organism>
<reference key="1">
    <citation type="journal article" date="2003" name="Nat. Genet.">
        <title>Comparative analysis of the genome sequences of Bordetella pertussis, Bordetella parapertussis and Bordetella bronchiseptica.</title>
        <authorList>
            <person name="Parkhill J."/>
            <person name="Sebaihia M."/>
            <person name="Preston A."/>
            <person name="Murphy L.D."/>
            <person name="Thomson N.R."/>
            <person name="Harris D.E."/>
            <person name="Holden M.T.G."/>
            <person name="Churcher C.M."/>
            <person name="Bentley S.D."/>
            <person name="Mungall K.L."/>
            <person name="Cerdeno-Tarraga A.-M."/>
            <person name="Temple L."/>
            <person name="James K.D."/>
            <person name="Harris B."/>
            <person name="Quail M.A."/>
            <person name="Achtman M."/>
            <person name="Atkin R."/>
            <person name="Baker S."/>
            <person name="Basham D."/>
            <person name="Bason N."/>
            <person name="Cherevach I."/>
            <person name="Chillingworth T."/>
            <person name="Collins M."/>
            <person name="Cronin A."/>
            <person name="Davis P."/>
            <person name="Doggett J."/>
            <person name="Feltwell T."/>
            <person name="Goble A."/>
            <person name="Hamlin N."/>
            <person name="Hauser H."/>
            <person name="Holroyd S."/>
            <person name="Jagels K."/>
            <person name="Leather S."/>
            <person name="Moule S."/>
            <person name="Norberczak H."/>
            <person name="O'Neil S."/>
            <person name="Ormond D."/>
            <person name="Price C."/>
            <person name="Rabbinowitsch E."/>
            <person name="Rutter S."/>
            <person name="Sanders M."/>
            <person name="Saunders D."/>
            <person name="Seeger K."/>
            <person name="Sharp S."/>
            <person name="Simmonds M."/>
            <person name="Skelton J."/>
            <person name="Squares R."/>
            <person name="Squares S."/>
            <person name="Stevens K."/>
            <person name="Unwin L."/>
            <person name="Whitehead S."/>
            <person name="Barrell B.G."/>
            <person name="Maskell D.J."/>
        </authorList>
    </citation>
    <scope>NUCLEOTIDE SEQUENCE [LARGE SCALE GENOMIC DNA]</scope>
    <source>
        <strain>12822 / ATCC BAA-587 / NCTC 13253</strain>
    </source>
</reference>
<accession>Q7W393</accession>
<sequence length="131" mass="14610">MSNRERPVKPYDLTVSVTPRYVPEQSDPSQQQYVFAYTVRITNTGSHPAQVISRHWIITDGEERVQEVRGLGVVGQQPLLAPGETFEYTSGCPLPTPIGTMRGTYHCVGENGIPFEVPIAEFLLAMPRTLH</sequence>
<gene>
    <name evidence="1" type="primary">apaG</name>
    <name type="ordered locus">BPP4153</name>
</gene>